<gene>
    <name evidence="1" type="primary">pnp</name>
    <name type="ordered locus">Sala_0543</name>
</gene>
<dbReference type="EC" id="2.7.7.8" evidence="1"/>
<dbReference type="EMBL" id="CP000356">
    <property type="protein sequence ID" value="ABF52264.1"/>
    <property type="molecule type" value="Genomic_DNA"/>
</dbReference>
<dbReference type="RefSeq" id="WP_011540855.1">
    <property type="nucleotide sequence ID" value="NC_008048.1"/>
</dbReference>
<dbReference type="SMR" id="Q1GVQ8"/>
<dbReference type="STRING" id="317655.Sala_0543"/>
<dbReference type="KEGG" id="sal:Sala_0543"/>
<dbReference type="eggNOG" id="COG1185">
    <property type="taxonomic scope" value="Bacteria"/>
</dbReference>
<dbReference type="HOGENOM" id="CLU_004217_2_2_5"/>
<dbReference type="OrthoDB" id="9804305at2"/>
<dbReference type="Proteomes" id="UP000006578">
    <property type="component" value="Chromosome"/>
</dbReference>
<dbReference type="GO" id="GO:0005829">
    <property type="term" value="C:cytosol"/>
    <property type="evidence" value="ECO:0007669"/>
    <property type="project" value="TreeGrafter"/>
</dbReference>
<dbReference type="GO" id="GO:0000175">
    <property type="term" value="F:3'-5'-RNA exonuclease activity"/>
    <property type="evidence" value="ECO:0007669"/>
    <property type="project" value="TreeGrafter"/>
</dbReference>
<dbReference type="GO" id="GO:0000287">
    <property type="term" value="F:magnesium ion binding"/>
    <property type="evidence" value="ECO:0007669"/>
    <property type="project" value="UniProtKB-UniRule"/>
</dbReference>
<dbReference type="GO" id="GO:0004654">
    <property type="term" value="F:polyribonucleotide nucleotidyltransferase activity"/>
    <property type="evidence" value="ECO:0007669"/>
    <property type="project" value="UniProtKB-UniRule"/>
</dbReference>
<dbReference type="GO" id="GO:0003723">
    <property type="term" value="F:RNA binding"/>
    <property type="evidence" value="ECO:0007669"/>
    <property type="project" value="UniProtKB-UniRule"/>
</dbReference>
<dbReference type="GO" id="GO:0006402">
    <property type="term" value="P:mRNA catabolic process"/>
    <property type="evidence" value="ECO:0007669"/>
    <property type="project" value="UniProtKB-UniRule"/>
</dbReference>
<dbReference type="GO" id="GO:0006396">
    <property type="term" value="P:RNA processing"/>
    <property type="evidence" value="ECO:0007669"/>
    <property type="project" value="InterPro"/>
</dbReference>
<dbReference type="CDD" id="cd02393">
    <property type="entry name" value="KH-I_PNPase"/>
    <property type="match status" value="1"/>
</dbReference>
<dbReference type="CDD" id="cd11363">
    <property type="entry name" value="RNase_PH_PNPase_1"/>
    <property type="match status" value="1"/>
</dbReference>
<dbReference type="CDD" id="cd11364">
    <property type="entry name" value="RNase_PH_PNPase_2"/>
    <property type="match status" value="1"/>
</dbReference>
<dbReference type="CDD" id="cd04472">
    <property type="entry name" value="S1_PNPase"/>
    <property type="match status" value="1"/>
</dbReference>
<dbReference type="FunFam" id="2.40.50.140:FF:000107">
    <property type="entry name" value="Polyribonucleotide nucleotidyltransferase"/>
    <property type="match status" value="1"/>
</dbReference>
<dbReference type="FunFam" id="3.30.1370.10:FF:000001">
    <property type="entry name" value="Polyribonucleotide nucleotidyltransferase"/>
    <property type="match status" value="1"/>
</dbReference>
<dbReference type="FunFam" id="3.30.230.70:FF:000001">
    <property type="entry name" value="Polyribonucleotide nucleotidyltransferase"/>
    <property type="match status" value="1"/>
</dbReference>
<dbReference type="FunFam" id="3.30.230.70:FF:000002">
    <property type="entry name" value="Polyribonucleotide nucleotidyltransferase"/>
    <property type="match status" value="1"/>
</dbReference>
<dbReference type="Gene3D" id="3.30.230.70">
    <property type="entry name" value="GHMP Kinase, N-terminal domain"/>
    <property type="match status" value="2"/>
</dbReference>
<dbReference type="Gene3D" id="3.30.1370.10">
    <property type="entry name" value="K Homology domain, type 1"/>
    <property type="match status" value="1"/>
</dbReference>
<dbReference type="Gene3D" id="2.40.50.140">
    <property type="entry name" value="Nucleic acid-binding proteins"/>
    <property type="match status" value="1"/>
</dbReference>
<dbReference type="HAMAP" id="MF_01595">
    <property type="entry name" value="PNPase"/>
    <property type="match status" value="1"/>
</dbReference>
<dbReference type="InterPro" id="IPR001247">
    <property type="entry name" value="ExoRNase_PH_dom1"/>
</dbReference>
<dbReference type="InterPro" id="IPR015847">
    <property type="entry name" value="ExoRNase_PH_dom2"/>
</dbReference>
<dbReference type="InterPro" id="IPR036345">
    <property type="entry name" value="ExoRNase_PH_dom2_sf"/>
</dbReference>
<dbReference type="InterPro" id="IPR004087">
    <property type="entry name" value="KH_dom"/>
</dbReference>
<dbReference type="InterPro" id="IPR004088">
    <property type="entry name" value="KH_dom_type_1"/>
</dbReference>
<dbReference type="InterPro" id="IPR036612">
    <property type="entry name" value="KH_dom_type_1_sf"/>
</dbReference>
<dbReference type="InterPro" id="IPR012340">
    <property type="entry name" value="NA-bd_OB-fold"/>
</dbReference>
<dbReference type="InterPro" id="IPR012162">
    <property type="entry name" value="PNPase"/>
</dbReference>
<dbReference type="InterPro" id="IPR027408">
    <property type="entry name" value="PNPase/RNase_PH_dom_sf"/>
</dbReference>
<dbReference type="InterPro" id="IPR015848">
    <property type="entry name" value="PNPase_PH_RNA-bd_bac/org-type"/>
</dbReference>
<dbReference type="InterPro" id="IPR036456">
    <property type="entry name" value="PNPase_PH_RNA-bd_sf"/>
</dbReference>
<dbReference type="InterPro" id="IPR020568">
    <property type="entry name" value="Ribosomal_Su5_D2-typ_SF"/>
</dbReference>
<dbReference type="InterPro" id="IPR003029">
    <property type="entry name" value="S1_domain"/>
</dbReference>
<dbReference type="NCBIfam" id="TIGR03591">
    <property type="entry name" value="polynuc_phos"/>
    <property type="match status" value="1"/>
</dbReference>
<dbReference type="NCBIfam" id="NF008805">
    <property type="entry name" value="PRK11824.1"/>
    <property type="match status" value="1"/>
</dbReference>
<dbReference type="PANTHER" id="PTHR11252">
    <property type="entry name" value="POLYRIBONUCLEOTIDE NUCLEOTIDYLTRANSFERASE"/>
    <property type="match status" value="1"/>
</dbReference>
<dbReference type="PANTHER" id="PTHR11252:SF0">
    <property type="entry name" value="POLYRIBONUCLEOTIDE NUCLEOTIDYLTRANSFERASE 1, MITOCHONDRIAL"/>
    <property type="match status" value="1"/>
</dbReference>
<dbReference type="Pfam" id="PF00013">
    <property type="entry name" value="KH_1"/>
    <property type="match status" value="1"/>
</dbReference>
<dbReference type="Pfam" id="PF03726">
    <property type="entry name" value="PNPase"/>
    <property type="match status" value="1"/>
</dbReference>
<dbReference type="Pfam" id="PF01138">
    <property type="entry name" value="RNase_PH"/>
    <property type="match status" value="2"/>
</dbReference>
<dbReference type="Pfam" id="PF03725">
    <property type="entry name" value="RNase_PH_C"/>
    <property type="match status" value="2"/>
</dbReference>
<dbReference type="Pfam" id="PF00575">
    <property type="entry name" value="S1"/>
    <property type="match status" value="1"/>
</dbReference>
<dbReference type="PIRSF" id="PIRSF005499">
    <property type="entry name" value="PNPase"/>
    <property type="match status" value="1"/>
</dbReference>
<dbReference type="SMART" id="SM00322">
    <property type="entry name" value="KH"/>
    <property type="match status" value="1"/>
</dbReference>
<dbReference type="SMART" id="SM00316">
    <property type="entry name" value="S1"/>
    <property type="match status" value="1"/>
</dbReference>
<dbReference type="SUPFAM" id="SSF54791">
    <property type="entry name" value="Eukaryotic type KH-domain (KH-domain type I)"/>
    <property type="match status" value="1"/>
</dbReference>
<dbReference type="SUPFAM" id="SSF50249">
    <property type="entry name" value="Nucleic acid-binding proteins"/>
    <property type="match status" value="1"/>
</dbReference>
<dbReference type="SUPFAM" id="SSF46915">
    <property type="entry name" value="Polynucleotide phosphorylase/guanosine pentaphosphate synthase (PNPase/GPSI), domain 3"/>
    <property type="match status" value="1"/>
</dbReference>
<dbReference type="SUPFAM" id="SSF55666">
    <property type="entry name" value="Ribonuclease PH domain 2-like"/>
    <property type="match status" value="2"/>
</dbReference>
<dbReference type="SUPFAM" id="SSF54211">
    <property type="entry name" value="Ribosomal protein S5 domain 2-like"/>
    <property type="match status" value="2"/>
</dbReference>
<dbReference type="PROSITE" id="PS50084">
    <property type="entry name" value="KH_TYPE_1"/>
    <property type="match status" value="1"/>
</dbReference>
<dbReference type="PROSITE" id="PS50126">
    <property type="entry name" value="S1"/>
    <property type="match status" value="1"/>
</dbReference>
<keyword id="KW-0963">Cytoplasm</keyword>
<keyword id="KW-0460">Magnesium</keyword>
<keyword id="KW-0479">Metal-binding</keyword>
<keyword id="KW-0548">Nucleotidyltransferase</keyword>
<keyword id="KW-1185">Reference proteome</keyword>
<keyword id="KW-0694">RNA-binding</keyword>
<keyword id="KW-0808">Transferase</keyword>
<reference key="1">
    <citation type="journal article" date="2009" name="Proc. Natl. Acad. Sci. U.S.A.">
        <title>The genomic basis of trophic strategy in marine bacteria.</title>
        <authorList>
            <person name="Lauro F.M."/>
            <person name="McDougald D."/>
            <person name="Thomas T."/>
            <person name="Williams T.J."/>
            <person name="Egan S."/>
            <person name="Rice S."/>
            <person name="DeMaere M.Z."/>
            <person name="Ting L."/>
            <person name="Ertan H."/>
            <person name="Johnson J."/>
            <person name="Ferriera S."/>
            <person name="Lapidus A."/>
            <person name="Anderson I."/>
            <person name="Kyrpides N."/>
            <person name="Munk A.C."/>
            <person name="Detter C."/>
            <person name="Han C.S."/>
            <person name="Brown M.V."/>
            <person name="Robb F.T."/>
            <person name="Kjelleberg S."/>
            <person name="Cavicchioli R."/>
        </authorList>
    </citation>
    <scope>NUCLEOTIDE SEQUENCE [LARGE SCALE GENOMIC DNA]</scope>
    <source>
        <strain>DSM 13593 / LMG 18877 / RB2256</strain>
    </source>
</reference>
<organism>
    <name type="scientific">Sphingopyxis alaskensis (strain DSM 13593 / LMG 18877 / RB2256)</name>
    <name type="common">Sphingomonas alaskensis</name>
    <dbReference type="NCBI Taxonomy" id="317655"/>
    <lineage>
        <taxon>Bacteria</taxon>
        <taxon>Pseudomonadati</taxon>
        <taxon>Pseudomonadota</taxon>
        <taxon>Alphaproteobacteria</taxon>
        <taxon>Sphingomonadales</taxon>
        <taxon>Sphingomonadaceae</taxon>
        <taxon>Sphingopyxis</taxon>
    </lineage>
</organism>
<accession>Q1GVQ8</accession>
<comment type="function">
    <text evidence="1">Involved in mRNA degradation. Catalyzes the phosphorolysis of single-stranded polyribonucleotides processively in the 3'- to 5'-direction.</text>
</comment>
<comment type="catalytic activity">
    <reaction evidence="1">
        <text>RNA(n+1) + phosphate = RNA(n) + a ribonucleoside 5'-diphosphate</text>
        <dbReference type="Rhea" id="RHEA:22096"/>
        <dbReference type="Rhea" id="RHEA-COMP:14527"/>
        <dbReference type="Rhea" id="RHEA-COMP:17342"/>
        <dbReference type="ChEBI" id="CHEBI:43474"/>
        <dbReference type="ChEBI" id="CHEBI:57930"/>
        <dbReference type="ChEBI" id="CHEBI:140395"/>
        <dbReference type="EC" id="2.7.7.8"/>
    </reaction>
</comment>
<comment type="cofactor">
    <cofactor evidence="1">
        <name>Mg(2+)</name>
        <dbReference type="ChEBI" id="CHEBI:18420"/>
    </cofactor>
</comment>
<comment type="subcellular location">
    <subcellularLocation>
        <location evidence="1">Cytoplasm</location>
    </subcellularLocation>
</comment>
<comment type="similarity">
    <text evidence="1">Belongs to the polyribonucleotide nucleotidyltransferase family.</text>
</comment>
<feature type="chain" id="PRO_0000329860" description="Polyribonucleotide nucleotidyltransferase">
    <location>
        <begin position="1"/>
        <end position="771"/>
    </location>
</feature>
<feature type="domain" description="KH" evidence="1">
    <location>
        <begin position="554"/>
        <end position="613"/>
    </location>
</feature>
<feature type="domain" description="S1 motif" evidence="1">
    <location>
        <begin position="623"/>
        <end position="691"/>
    </location>
</feature>
<feature type="region of interest" description="Disordered" evidence="2">
    <location>
        <begin position="696"/>
        <end position="771"/>
    </location>
</feature>
<feature type="compositionally biased region" description="Basic and acidic residues" evidence="2">
    <location>
        <begin position="702"/>
        <end position="771"/>
    </location>
</feature>
<feature type="binding site" evidence="1">
    <location>
        <position position="487"/>
    </location>
    <ligand>
        <name>Mg(2+)</name>
        <dbReference type="ChEBI" id="CHEBI:18420"/>
    </ligand>
</feature>
<feature type="binding site" evidence="1">
    <location>
        <position position="493"/>
    </location>
    <ligand>
        <name>Mg(2+)</name>
        <dbReference type="ChEBI" id="CHEBI:18420"/>
    </ligand>
</feature>
<evidence type="ECO:0000255" key="1">
    <source>
        <dbReference type="HAMAP-Rule" id="MF_01595"/>
    </source>
</evidence>
<evidence type="ECO:0000256" key="2">
    <source>
        <dbReference type="SAM" id="MobiDB-lite"/>
    </source>
</evidence>
<proteinExistence type="inferred from homology"/>
<protein>
    <recommendedName>
        <fullName evidence="1">Polyribonucleotide nucleotidyltransferase</fullName>
        <ecNumber evidence="1">2.7.7.8</ecNumber>
    </recommendedName>
    <alternativeName>
        <fullName evidence="1">Polynucleotide phosphorylase</fullName>
        <shortName evidence="1">PNPase</shortName>
    </alternativeName>
</protein>
<sequence length="771" mass="83526">MFDVKKVSIEWGGETLTLETGKVARQADGAVIATLGETVVLCAVTAAKSVKDGQDFFPLTVHYQEKYSAAGRIPGGFFKRERGATEKETLVSRLIDRPIRPLFPEGFYNEINAIAQVLSYDGHNEPDILAMVAASAALTISGVPFMGPIGAARVGYLNGEYILNPTDEQVAEGDLDLVVAATHDAVMMVESEANELSEEVMLGAVLFAHDACKEVVKAIIKLAEQAAKEPWEIASSDDDAALKDKLRKLIGKDIAAAYKLTDKSARSNALNEARAKAKESFIADGLDPQAVMAGIKIVKKLEAEIVRTAILKEGKRIDGRTTTQIRPIVAETHFLPRAHGSALFTRGETQTIATCTLGTKDAEQMIDGLNGLSYQHFMLHYNFPPYSVGEVGRFGAPGRREVGHGKLAWRALHPVLPSKDEFPYTIRLTSDITESNGSSSMASVCGGSLAMMDAGVPIKRPVSGIAMGLILEGKDYAILSDILGDEDHLGDMDFKVAGTSEGITTMQMDIKIAGITREIFEAALAQAKEGRAHILGEMNKALGEVRTELSAHAPRIETMQIDKAKIRDVIGTGGKVIREIVATTGAKVDIDDEGLIKISSSDLDQIEAARKWIAGIVEEAEVGKIYDGKVVNLVDFGAFVNFMGGKDGLVHVSEIRNERVEKVADVLSEGQDVKVKVLEIDPRGKVRLSMRVVDQETGAELEDTRPAREPRERGDRGDRGDRGPRRDGGDRNRGGRERGPRRDGGGDRGPRRERSEDGPEDQGHVPDFLKD</sequence>
<name>PNP_SPHAL</name>